<feature type="initiator methionine" description="Removed" evidence="4">
    <location>
        <position position="1"/>
    </location>
</feature>
<feature type="chain" id="PRO_0000012635" description="Guanine nucleotide-binding protein G(I)/G(S)/G(O) subunit gamma-7">
    <location>
        <begin position="2"/>
        <end position="65"/>
    </location>
</feature>
<feature type="propeptide" id="PRO_0000012636" description="Removed in mature form" evidence="1">
    <location>
        <begin position="66"/>
        <end position="68"/>
    </location>
</feature>
<feature type="modified residue" description="N-acetylserine" evidence="4">
    <location>
        <position position="2"/>
    </location>
</feature>
<feature type="modified residue" description="Cysteine methyl ester" evidence="1">
    <location>
        <position position="65"/>
    </location>
</feature>
<feature type="lipid moiety-binding region" description="S-geranylgeranyl cysteine" evidence="1">
    <location>
        <position position="65"/>
    </location>
</feature>
<keyword id="KW-0007">Acetylation</keyword>
<keyword id="KW-1003">Cell membrane</keyword>
<keyword id="KW-0449">Lipoprotein</keyword>
<keyword id="KW-0472">Membrane</keyword>
<keyword id="KW-0488">Methylation</keyword>
<keyword id="KW-0636">Prenylation</keyword>
<keyword id="KW-1267">Proteomics identification</keyword>
<keyword id="KW-1185">Reference proteome</keyword>
<keyword id="KW-0807">Transducer</keyword>
<dbReference type="EMBL" id="AB010414">
    <property type="protein sequence ID" value="BAA28348.1"/>
    <property type="molecule type" value="mRNA"/>
</dbReference>
<dbReference type="EMBL" id="AF493874">
    <property type="protein sequence ID" value="AAM12588.1"/>
    <property type="molecule type" value="mRNA"/>
</dbReference>
<dbReference type="EMBL" id="AK311750">
    <property type="protein sequence ID" value="BAG34693.1"/>
    <property type="molecule type" value="mRNA"/>
</dbReference>
<dbReference type="EMBL" id="AC005512">
    <property type="protein sequence ID" value="AAC32595.1"/>
    <property type="molecule type" value="Genomic_DNA"/>
</dbReference>
<dbReference type="EMBL" id="BC014466">
    <property type="protein sequence ID" value="AAH14466.1"/>
    <property type="molecule type" value="mRNA"/>
</dbReference>
<dbReference type="EMBL" id="BC053630">
    <property type="protein sequence ID" value="AAH53630.1"/>
    <property type="molecule type" value="mRNA"/>
</dbReference>
<dbReference type="CCDS" id="CCDS12091.1"/>
<dbReference type="PIR" id="JW0050">
    <property type="entry name" value="JW0050"/>
</dbReference>
<dbReference type="RefSeq" id="NP_443079.1">
    <property type="nucleotide sequence ID" value="NM_052847.3"/>
</dbReference>
<dbReference type="RefSeq" id="XP_016882095.1">
    <property type="nucleotide sequence ID" value="XM_017026606.1"/>
</dbReference>
<dbReference type="RefSeq" id="XP_047294585.1">
    <property type="nucleotide sequence ID" value="XM_047438629.1"/>
</dbReference>
<dbReference type="RefSeq" id="XP_054176555.1">
    <property type="nucleotide sequence ID" value="XM_054320580.1"/>
</dbReference>
<dbReference type="RefSeq" id="XP_054176556.1">
    <property type="nucleotide sequence ID" value="XM_054320581.1"/>
</dbReference>
<dbReference type="SMR" id="O60262"/>
<dbReference type="BioGRID" id="109050">
    <property type="interactions" value="18"/>
</dbReference>
<dbReference type="CORUM" id="O60262"/>
<dbReference type="FunCoup" id="O60262">
    <property type="interactions" value="1921"/>
</dbReference>
<dbReference type="IntAct" id="O60262">
    <property type="interactions" value="11"/>
</dbReference>
<dbReference type="STRING" id="9606.ENSP00000371594"/>
<dbReference type="iPTMnet" id="O60262"/>
<dbReference type="PhosphoSitePlus" id="O60262"/>
<dbReference type="BioMuta" id="GNG7"/>
<dbReference type="jPOST" id="O60262"/>
<dbReference type="MassIVE" id="O60262"/>
<dbReference type="PaxDb" id="9606-ENSP00000371594"/>
<dbReference type="PeptideAtlas" id="O60262"/>
<dbReference type="ProteomicsDB" id="49296"/>
<dbReference type="Pumba" id="O60262"/>
<dbReference type="Antibodypedia" id="23032">
    <property type="antibodies" value="149 antibodies from 23 providers"/>
</dbReference>
<dbReference type="DNASU" id="2788"/>
<dbReference type="Ensembl" id="ENST00000382159.8">
    <property type="protein sequence ID" value="ENSP00000371594.2"/>
    <property type="gene ID" value="ENSG00000176533.13"/>
</dbReference>
<dbReference type="GeneID" id="2788"/>
<dbReference type="KEGG" id="hsa:2788"/>
<dbReference type="MANE-Select" id="ENST00000382159.8">
    <property type="protein sequence ID" value="ENSP00000371594.2"/>
    <property type="RefSeq nucleotide sequence ID" value="NM_052847.3"/>
    <property type="RefSeq protein sequence ID" value="NP_443079.1"/>
</dbReference>
<dbReference type="UCSC" id="uc002lwd.3">
    <property type="organism name" value="human"/>
</dbReference>
<dbReference type="AGR" id="HGNC:4410"/>
<dbReference type="CTD" id="2788"/>
<dbReference type="DisGeNET" id="2788"/>
<dbReference type="GeneCards" id="GNG7"/>
<dbReference type="HGNC" id="HGNC:4410">
    <property type="gene designation" value="GNG7"/>
</dbReference>
<dbReference type="HPA" id="ENSG00000176533">
    <property type="expression patterns" value="Tissue enriched (brain)"/>
</dbReference>
<dbReference type="MIM" id="604430">
    <property type="type" value="gene"/>
</dbReference>
<dbReference type="neXtProt" id="NX_O60262"/>
<dbReference type="OpenTargets" id="ENSG00000176533"/>
<dbReference type="PharmGKB" id="PA28789"/>
<dbReference type="VEuPathDB" id="HostDB:ENSG00000176533"/>
<dbReference type="eggNOG" id="KOG4119">
    <property type="taxonomic scope" value="Eukaryota"/>
</dbReference>
<dbReference type="GeneTree" id="ENSGT01100000263497"/>
<dbReference type="HOGENOM" id="CLU_168377_3_1_1"/>
<dbReference type="InParanoid" id="O60262"/>
<dbReference type="OMA" id="CLELMNY"/>
<dbReference type="OrthoDB" id="6264244at2759"/>
<dbReference type="PAN-GO" id="O60262">
    <property type="GO annotations" value="3 GO annotations based on evolutionary models"/>
</dbReference>
<dbReference type="PhylomeDB" id="O60262"/>
<dbReference type="TreeFam" id="TF319909"/>
<dbReference type="PathwayCommons" id="O60262"/>
<dbReference type="Reactome" id="R-HSA-1296041">
    <property type="pathway name" value="Activation of G protein gated Potassium channels"/>
</dbReference>
<dbReference type="Reactome" id="R-HSA-163359">
    <property type="pathway name" value="Glucagon signaling in metabolic regulation"/>
</dbReference>
<dbReference type="Reactome" id="R-HSA-202040">
    <property type="pathway name" value="G-protein activation"/>
</dbReference>
<dbReference type="Reactome" id="R-HSA-381676">
    <property type="pathway name" value="Glucagon-like Peptide-1 (GLP1) regulates insulin secretion"/>
</dbReference>
<dbReference type="Reactome" id="R-HSA-392170">
    <property type="pathway name" value="ADP signalling through P2Y purinoceptor 12"/>
</dbReference>
<dbReference type="Reactome" id="R-HSA-392451">
    <property type="pathway name" value="G beta:gamma signalling through PI3Kgamma"/>
</dbReference>
<dbReference type="Reactome" id="R-HSA-392851">
    <property type="pathway name" value="Prostacyclin signalling through prostacyclin receptor"/>
</dbReference>
<dbReference type="Reactome" id="R-HSA-400042">
    <property type="pathway name" value="Adrenaline,noradrenaline inhibits insulin secretion"/>
</dbReference>
<dbReference type="Reactome" id="R-HSA-4086398">
    <property type="pathway name" value="Ca2+ pathway"/>
</dbReference>
<dbReference type="Reactome" id="R-HSA-416476">
    <property type="pathway name" value="G alpha (q) signalling events"/>
</dbReference>
<dbReference type="Reactome" id="R-HSA-416482">
    <property type="pathway name" value="G alpha (12/13) signalling events"/>
</dbReference>
<dbReference type="Reactome" id="R-HSA-418217">
    <property type="pathway name" value="G beta:gamma signalling through PLC beta"/>
</dbReference>
<dbReference type="Reactome" id="R-HSA-418555">
    <property type="pathway name" value="G alpha (s) signalling events"/>
</dbReference>
<dbReference type="Reactome" id="R-HSA-418592">
    <property type="pathway name" value="ADP signalling through P2Y purinoceptor 1"/>
</dbReference>
<dbReference type="Reactome" id="R-HSA-418594">
    <property type="pathway name" value="G alpha (i) signalling events"/>
</dbReference>
<dbReference type="Reactome" id="R-HSA-418597">
    <property type="pathway name" value="G alpha (z) signalling events"/>
</dbReference>
<dbReference type="Reactome" id="R-HSA-420092">
    <property type="pathway name" value="Glucagon-type ligand receptors"/>
</dbReference>
<dbReference type="Reactome" id="R-HSA-428930">
    <property type="pathway name" value="Thromboxane signalling through TP receptor"/>
</dbReference>
<dbReference type="Reactome" id="R-HSA-432040">
    <property type="pathway name" value="Vasopressin regulates renal water homeostasis via Aquaporins"/>
</dbReference>
<dbReference type="Reactome" id="R-HSA-456926">
    <property type="pathway name" value="Thrombin signalling through proteinase activated receptors (PARs)"/>
</dbReference>
<dbReference type="Reactome" id="R-HSA-500657">
    <property type="pathway name" value="Presynaptic function of Kainate receptors"/>
</dbReference>
<dbReference type="Reactome" id="R-HSA-6814122">
    <property type="pathway name" value="Cooperation of PDCL (PhLP1) and TRiC/CCT in G-protein beta folding"/>
</dbReference>
<dbReference type="Reactome" id="R-HSA-8964315">
    <property type="pathway name" value="G beta:gamma signalling through BTK"/>
</dbReference>
<dbReference type="Reactome" id="R-HSA-8964616">
    <property type="pathway name" value="G beta:gamma signalling through CDC42"/>
</dbReference>
<dbReference type="Reactome" id="R-HSA-9009391">
    <property type="pathway name" value="Extra-nuclear estrogen signaling"/>
</dbReference>
<dbReference type="Reactome" id="R-HSA-9634597">
    <property type="pathway name" value="GPER1 signaling"/>
</dbReference>
<dbReference type="Reactome" id="R-HSA-9660821">
    <property type="pathway name" value="ADORA2B mediated anti-inflammatory cytokines production"/>
</dbReference>
<dbReference type="Reactome" id="R-HSA-9856530">
    <property type="pathway name" value="High laminar flow shear stress activates signaling by PIEZO1 and PECAM1:CDH5:KDR in endothelial cells"/>
</dbReference>
<dbReference type="Reactome" id="R-HSA-997272">
    <property type="pathway name" value="Inhibition of voltage gated Ca2+ channels via Gbeta/gamma subunits"/>
</dbReference>
<dbReference type="SignaLink" id="O60262"/>
<dbReference type="BioGRID-ORCS" id="2788">
    <property type="hits" value="12 hits in 1147 CRISPR screens"/>
</dbReference>
<dbReference type="ChiTaRS" id="GNG7">
    <property type="organism name" value="human"/>
</dbReference>
<dbReference type="GeneWiki" id="GNG7"/>
<dbReference type="GenomeRNAi" id="2788"/>
<dbReference type="Pharos" id="O60262">
    <property type="development level" value="Tbio"/>
</dbReference>
<dbReference type="PRO" id="PR:O60262"/>
<dbReference type="Proteomes" id="UP000005640">
    <property type="component" value="Chromosome 19"/>
</dbReference>
<dbReference type="RNAct" id="O60262">
    <property type="molecule type" value="protein"/>
</dbReference>
<dbReference type="Bgee" id="ENSG00000176533">
    <property type="expression patterns" value="Expressed in nucleus accumbens and 193 other cell types or tissues"/>
</dbReference>
<dbReference type="ExpressionAtlas" id="O60262">
    <property type="expression patterns" value="baseline and differential"/>
</dbReference>
<dbReference type="GO" id="GO:0070062">
    <property type="term" value="C:extracellular exosome"/>
    <property type="evidence" value="ECO:0007005"/>
    <property type="project" value="UniProtKB"/>
</dbReference>
<dbReference type="GO" id="GO:0005834">
    <property type="term" value="C:heterotrimeric G-protein complex"/>
    <property type="evidence" value="ECO:0000318"/>
    <property type="project" value="GO_Central"/>
</dbReference>
<dbReference type="GO" id="GO:0005886">
    <property type="term" value="C:plasma membrane"/>
    <property type="evidence" value="ECO:0000304"/>
    <property type="project" value="Reactome"/>
</dbReference>
<dbReference type="GO" id="GO:0045202">
    <property type="term" value="C:synapse"/>
    <property type="evidence" value="ECO:0007669"/>
    <property type="project" value="Ensembl"/>
</dbReference>
<dbReference type="GO" id="GO:0031681">
    <property type="term" value="F:G-protein beta-subunit binding"/>
    <property type="evidence" value="ECO:0000318"/>
    <property type="project" value="GO_Central"/>
</dbReference>
<dbReference type="GO" id="GO:0001662">
    <property type="term" value="P:behavioral fear response"/>
    <property type="evidence" value="ECO:0007669"/>
    <property type="project" value="Ensembl"/>
</dbReference>
<dbReference type="GO" id="GO:0007186">
    <property type="term" value="P:G protein-coupled receptor signaling pathway"/>
    <property type="evidence" value="ECO:0000318"/>
    <property type="project" value="GO_Central"/>
</dbReference>
<dbReference type="GO" id="GO:0007626">
    <property type="term" value="P:locomotory behavior"/>
    <property type="evidence" value="ECO:0007669"/>
    <property type="project" value="Ensembl"/>
</dbReference>
<dbReference type="GO" id="GO:0007168">
    <property type="term" value="P:receptor guanylyl cyclase signaling pathway"/>
    <property type="evidence" value="ECO:0007669"/>
    <property type="project" value="Ensembl"/>
</dbReference>
<dbReference type="GO" id="GO:0008277">
    <property type="term" value="P:regulation of G protein-coupled receptor signaling pathway"/>
    <property type="evidence" value="ECO:0000304"/>
    <property type="project" value="ProtInc"/>
</dbReference>
<dbReference type="CDD" id="cd00068">
    <property type="entry name" value="GGL"/>
    <property type="match status" value="1"/>
</dbReference>
<dbReference type="FunFam" id="4.10.260.10:FF:000001">
    <property type="entry name" value="Guanine nucleotide-binding protein subunit gamma"/>
    <property type="match status" value="1"/>
</dbReference>
<dbReference type="Gene3D" id="4.10.260.10">
    <property type="entry name" value="Transducin (heterotrimeric G protein), gamma chain"/>
    <property type="match status" value="1"/>
</dbReference>
<dbReference type="InterPro" id="IPR015898">
    <property type="entry name" value="G-protein_gamma-like_dom"/>
</dbReference>
<dbReference type="InterPro" id="IPR036284">
    <property type="entry name" value="GGL_sf"/>
</dbReference>
<dbReference type="InterPro" id="IPR001770">
    <property type="entry name" value="Gprotein-gamma"/>
</dbReference>
<dbReference type="PANTHER" id="PTHR13809">
    <property type="entry name" value="GUANINE NUCLEOTIDE-BINDING PROTEIN GAMMA SUBUNIT"/>
    <property type="match status" value="1"/>
</dbReference>
<dbReference type="Pfam" id="PF00631">
    <property type="entry name" value="G-gamma"/>
    <property type="match status" value="1"/>
</dbReference>
<dbReference type="PRINTS" id="PR00321">
    <property type="entry name" value="GPROTEING"/>
</dbReference>
<dbReference type="SMART" id="SM01224">
    <property type="entry name" value="G_gamma"/>
    <property type="match status" value="1"/>
</dbReference>
<dbReference type="SMART" id="SM00224">
    <property type="entry name" value="GGL"/>
    <property type="match status" value="1"/>
</dbReference>
<dbReference type="SUPFAM" id="SSF48670">
    <property type="entry name" value="Transducin (heterotrimeric G protein), gamma chain"/>
    <property type="match status" value="1"/>
</dbReference>
<dbReference type="PROSITE" id="PS50058">
    <property type="entry name" value="G_PROTEIN_GAMMA"/>
    <property type="match status" value="1"/>
</dbReference>
<protein>
    <recommendedName>
        <fullName>Guanine nucleotide-binding protein G(I)/G(S)/G(O) subunit gamma-7</fullName>
    </recommendedName>
</protein>
<reference key="1">
    <citation type="journal article" date="1998" name="Biochem. Biophys. Res. Commun.">
        <title>Identification and cloning of human G-protein gamma 7, down-regulated in pancreatic cancer.</title>
        <authorList>
            <person name="Shibata K."/>
            <person name="Mori M."/>
            <person name="Tanaka S."/>
            <person name="Kitano S."/>
            <person name="Akiyoshi T."/>
        </authorList>
    </citation>
    <scope>NUCLEOTIDE SEQUENCE [MRNA]</scope>
</reference>
<reference key="2">
    <citation type="submission" date="2002-03" db="EMBL/GenBank/DDBJ databases">
        <title>cDNA clones of human proteins involved in signal transduction sequenced by the Guthrie cDNA resource center (www.cdna.org).</title>
        <authorList>
            <person name="Puhl H.L. III"/>
            <person name="Ikeda S.R."/>
            <person name="Aronstam R.S."/>
        </authorList>
    </citation>
    <scope>NUCLEOTIDE SEQUENCE [LARGE SCALE MRNA]</scope>
</reference>
<reference key="3">
    <citation type="journal article" date="2004" name="Nat. Genet.">
        <title>Complete sequencing and characterization of 21,243 full-length human cDNAs.</title>
        <authorList>
            <person name="Ota T."/>
            <person name="Suzuki Y."/>
            <person name="Nishikawa T."/>
            <person name="Otsuki T."/>
            <person name="Sugiyama T."/>
            <person name="Irie R."/>
            <person name="Wakamatsu A."/>
            <person name="Hayashi K."/>
            <person name="Sato H."/>
            <person name="Nagai K."/>
            <person name="Kimura K."/>
            <person name="Makita H."/>
            <person name="Sekine M."/>
            <person name="Obayashi M."/>
            <person name="Nishi T."/>
            <person name="Shibahara T."/>
            <person name="Tanaka T."/>
            <person name="Ishii S."/>
            <person name="Yamamoto J."/>
            <person name="Saito K."/>
            <person name="Kawai Y."/>
            <person name="Isono Y."/>
            <person name="Nakamura Y."/>
            <person name="Nagahari K."/>
            <person name="Murakami K."/>
            <person name="Yasuda T."/>
            <person name="Iwayanagi T."/>
            <person name="Wagatsuma M."/>
            <person name="Shiratori A."/>
            <person name="Sudo H."/>
            <person name="Hosoiri T."/>
            <person name="Kaku Y."/>
            <person name="Kodaira H."/>
            <person name="Kondo H."/>
            <person name="Sugawara M."/>
            <person name="Takahashi M."/>
            <person name="Kanda K."/>
            <person name="Yokoi T."/>
            <person name="Furuya T."/>
            <person name="Kikkawa E."/>
            <person name="Omura Y."/>
            <person name="Abe K."/>
            <person name="Kamihara K."/>
            <person name="Katsuta N."/>
            <person name="Sato K."/>
            <person name="Tanikawa M."/>
            <person name="Yamazaki M."/>
            <person name="Ninomiya K."/>
            <person name="Ishibashi T."/>
            <person name="Yamashita H."/>
            <person name="Murakawa K."/>
            <person name="Fujimori K."/>
            <person name="Tanai H."/>
            <person name="Kimata M."/>
            <person name="Watanabe M."/>
            <person name="Hiraoka S."/>
            <person name="Chiba Y."/>
            <person name="Ishida S."/>
            <person name="Ono Y."/>
            <person name="Takiguchi S."/>
            <person name="Watanabe S."/>
            <person name="Yosida M."/>
            <person name="Hotuta T."/>
            <person name="Kusano J."/>
            <person name="Kanehori K."/>
            <person name="Takahashi-Fujii A."/>
            <person name="Hara H."/>
            <person name="Tanase T.-O."/>
            <person name="Nomura Y."/>
            <person name="Togiya S."/>
            <person name="Komai F."/>
            <person name="Hara R."/>
            <person name="Takeuchi K."/>
            <person name="Arita M."/>
            <person name="Imose N."/>
            <person name="Musashino K."/>
            <person name="Yuuki H."/>
            <person name="Oshima A."/>
            <person name="Sasaki N."/>
            <person name="Aotsuka S."/>
            <person name="Yoshikawa Y."/>
            <person name="Matsunawa H."/>
            <person name="Ichihara T."/>
            <person name="Shiohata N."/>
            <person name="Sano S."/>
            <person name="Moriya S."/>
            <person name="Momiyama H."/>
            <person name="Satoh N."/>
            <person name="Takami S."/>
            <person name="Terashima Y."/>
            <person name="Suzuki O."/>
            <person name="Nakagawa S."/>
            <person name="Senoh A."/>
            <person name="Mizoguchi H."/>
            <person name="Goto Y."/>
            <person name="Shimizu F."/>
            <person name="Wakebe H."/>
            <person name="Hishigaki H."/>
            <person name="Watanabe T."/>
            <person name="Sugiyama A."/>
            <person name="Takemoto M."/>
            <person name="Kawakami B."/>
            <person name="Yamazaki M."/>
            <person name="Watanabe K."/>
            <person name="Kumagai A."/>
            <person name="Itakura S."/>
            <person name="Fukuzumi Y."/>
            <person name="Fujimori Y."/>
            <person name="Komiyama M."/>
            <person name="Tashiro H."/>
            <person name="Tanigami A."/>
            <person name="Fujiwara T."/>
            <person name="Ono T."/>
            <person name="Yamada K."/>
            <person name="Fujii Y."/>
            <person name="Ozaki K."/>
            <person name="Hirao M."/>
            <person name="Ohmori Y."/>
            <person name="Kawabata A."/>
            <person name="Hikiji T."/>
            <person name="Kobatake N."/>
            <person name="Inagaki H."/>
            <person name="Ikema Y."/>
            <person name="Okamoto S."/>
            <person name="Okitani R."/>
            <person name="Kawakami T."/>
            <person name="Noguchi S."/>
            <person name="Itoh T."/>
            <person name="Shigeta K."/>
            <person name="Senba T."/>
            <person name="Matsumura K."/>
            <person name="Nakajima Y."/>
            <person name="Mizuno T."/>
            <person name="Morinaga M."/>
            <person name="Sasaki M."/>
            <person name="Togashi T."/>
            <person name="Oyama M."/>
            <person name="Hata H."/>
            <person name="Watanabe M."/>
            <person name="Komatsu T."/>
            <person name="Mizushima-Sugano J."/>
            <person name="Satoh T."/>
            <person name="Shirai Y."/>
            <person name="Takahashi Y."/>
            <person name="Nakagawa K."/>
            <person name="Okumura K."/>
            <person name="Nagase T."/>
            <person name="Nomura N."/>
            <person name="Kikuchi H."/>
            <person name="Masuho Y."/>
            <person name="Yamashita R."/>
            <person name="Nakai K."/>
            <person name="Yada T."/>
            <person name="Nakamura Y."/>
            <person name="Ohara O."/>
            <person name="Isogai T."/>
            <person name="Sugano S."/>
        </authorList>
    </citation>
    <scope>NUCLEOTIDE SEQUENCE [LARGE SCALE MRNA]</scope>
    <source>
        <tissue>Amygdala</tissue>
    </source>
</reference>
<reference key="4">
    <citation type="journal article" date="2004" name="Nature">
        <title>The DNA sequence and biology of human chromosome 19.</title>
        <authorList>
            <person name="Grimwood J."/>
            <person name="Gordon L.A."/>
            <person name="Olsen A.S."/>
            <person name="Terry A."/>
            <person name="Schmutz J."/>
            <person name="Lamerdin J.E."/>
            <person name="Hellsten U."/>
            <person name="Goodstein D."/>
            <person name="Couronne O."/>
            <person name="Tran-Gyamfi M."/>
            <person name="Aerts A."/>
            <person name="Altherr M."/>
            <person name="Ashworth L."/>
            <person name="Bajorek E."/>
            <person name="Black S."/>
            <person name="Branscomb E."/>
            <person name="Caenepeel S."/>
            <person name="Carrano A.V."/>
            <person name="Caoile C."/>
            <person name="Chan Y.M."/>
            <person name="Christensen M."/>
            <person name="Cleland C.A."/>
            <person name="Copeland A."/>
            <person name="Dalin E."/>
            <person name="Dehal P."/>
            <person name="Denys M."/>
            <person name="Detter J.C."/>
            <person name="Escobar J."/>
            <person name="Flowers D."/>
            <person name="Fotopulos D."/>
            <person name="Garcia C."/>
            <person name="Georgescu A.M."/>
            <person name="Glavina T."/>
            <person name="Gomez M."/>
            <person name="Gonzales E."/>
            <person name="Groza M."/>
            <person name="Hammon N."/>
            <person name="Hawkins T."/>
            <person name="Haydu L."/>
            <person name="Ho I."/>
            <person name="Huang W."/>
            <person name="Israni S."/>
            <person name="Jett J."/>
            <person name="Kadner K."/>
            <person name="Kimball H."/>
            <person name="Kobayashi A."/>
            <person name="Larionov V."/>
            <person name="Leem S.-H."/>
            <person name="Lopez F."/>
            <person name="Lou Y."/>
            <person name="Lowry S."/>
            <person name="Malfatti S."/>
            <person name="Martinez D."/>
            <person name="McCready P.M."/>
            <person name="Medina C."/>
            <person name="Morgan J."/>
            <person name="Nelson K."/>
            <person name="Nolan M."/>
            <person name="Ovcharenko I."/>
            <person name="Pitluck S."/>
            <person name="Pollard M."/>
            <person name="Popkie A.P."/>
            <person name="Predki P."/>
            <person name="Quan G."/>
            <person name="Ramirez L."/>
            <person name="Rash S."/>
            <person name="Retterer J."/>
            <person name="Rodriguez A."/>
            <person name="Rogers S."/>
            <person name="Salamov A."/>
            <person name="Salazar A."/>
            <person name="She X."/>
            <person name="Smith D."/>
            <person name="Slezak T."/>
            <person name="Solovyev V."/>
            <person name="Thayer N."/>
            <person name="Tice H."/>
            <person name="Tsai M."/>
            <person name="Ustaszewska A."/>
            <person name="Vo N."/>
            <person name="Wagner M."/>
            <person name="Wheeler J."/>
            <person name="Wu K."/>
            <person name="Xie G."/>
            <person name="Yang J."/>
            <person name="Dubchak I."/>
            <person name="Furey T.S."/>
            <person name="DeJong P."/>
            <person name="Dickson M."/>
            <person name="Gordon D."/>
            <person name="Eichler E.E."/>
            <person name="Pennacchio L.A."/>
            <person name="Richardson P."/>
            <person name="Stubbs L."/>
            <person name="Rokhsar D.S."/>
            <person name="Myers R.M."/>
            <person name="Rubin E.M."/>
            <person name="Lucas S.M."/>
        </authorList>
    </citation>
    <scope>NUCLEOTIDE SEQUENCE [LARGE SCALE GENOMIC DNA]</scope>
</reference>
<reference key="5">
    <citation type="journal article" date="2004" name="Genome Res.">
        <title>The status, quality, and expansion of the NIH full-length cDNA project: the Mammalian Gene Collection (MGC).</title>
        <authorList>
            <consortium name="The MGC Project Team"/>
        </authorList>
    </citation>
    <scope>NUCLEOTIDE SEQUENCE [LARGE SCALE MRNA]</scope>
    <source>
        <tissue>Skin</tissue>
        <tissue>Uterus</tissue>
    </source>
</reference>
<reference key="6">
    <citation type="journal article" date="2008" name="Br. J. Cancer">
        <title>Clinical significance of the reduced expression of G protein gamma 7 (GNG7) in oesophageal cancer.</title>
        <authorList>
            <person name="Ohta M."/>
            <person name="Mimori K."/>
            <person name="Fukuyoshi Y."/>
            <person name="Kita Y."/>
            <person name="Motoyama K."/>
            <person name="Yamashita K."/>
            <person name="Ishii H."/>
            <person name="Inoue H."/>
            <person name="Mori M."/>
        </authorList>
    </citation>
    <scope>TISSUE SPECIFICITY</scope>
</reference>
<reference key="7">
    <citation type="journal article" date="2009" name="Anal. Chem.">
        <title>Lys-N and trypsin cover complementary parts of the phosphoproteome in a refined SCX-based approach.</title>
        <authorList>
            <person name="Gauci S."/>
            <person name="Helbig A.O."/>
            <person name="Slijper M."/>
            <person name="Krijgsveld J."/>
            <person name="Heck A.J."/>
            <person name="Mohammed S."/>
        </authorList>
    </citation>
    <scope>ACETYLATION [LARGE SCALE ANALYSIS] AT SER-2</scope>
    <scope>CLEAVAGE OF INITIATOR METHIONINE [LARGE SCALE ANALYSIS]</scope>
    <scope>IDENTIFICATION BY MASS SPECTROMETRY [LARGE SCALE ANALYSIS]</scope>
</reference>
<reference key="8">
    <citation type="journal article" date="2015" name="Proteomics">
        <title>N-terminome analysis of the human mitochondrial proteome.</title>
        <authorList>
            <person name="Vaca Jacome A.S."/>
            <person name="Rabilloud T."/>
            <person name="Schaeffer-Reiss C."/>
            <person name="Rompais M."/>
            <person name="Ayoub D."/>
            <person name="Lane L."/>
            <person name="Bairoch A."/>
            <person name="Van Dorsselaer A."/>
            <person name="Carapito C."/>
        </authorList>
    </citation>
    <scope>IDENTIFICATION BY MASS SPECTROMETRY [LARGE SCALE ANALYSIS]</scope>
</reference>
<accession>O60262</accession>
<accession>B2R496</accession>
<evidence type="ECO:0000250" key="1"/>
<evidence type="ECO:0000269" key="2">
    <source>
    </source>
</evidence>
<evidence type="ECO:0000305" key="3"/>
<evidence type="ECO:0007744" key="4">
    <source>
    </source>
</evidence>
<name>GBG7_HUMAN</name>
<comment type="function">
    <text evidence="1">Guanine nucleotide-binding proteins (G proteins) are involved as a modulator or transducer in various transmembrane signaling systems. The beta and gamma chains are required for the GTPase activity, for replacement of GDP by GTP, and for G protein-effector interaction. Plays a role in the regulation of adenylyl cyclase signaling in certain regions of the brain. Plays a role in the formation or stabilization of a G protein heterotrimer (G(olf) subunit alpha-beta-gamma-7) that is required for adenylyl cyclase activity in the striatum (By similarity).</text>
</comment>
<comment type="subunit">
    <text>G proteins are composed of 3 units, alpha, beta and gamma.</text>
</comment>
<comment type="interaction">
    <interactant intactId="EBI-717760">
        <id>O60262</id>
    </interactant>
    <interactant intactId="EBI-739467">
        <id>Q9H8Y8</id>
        <label>GORASP2</label>
    </interactant>
    <organismsDiffer>false</organismsDiffer>
    <experiments>6</experiments>
</comment>
<comment type="subcellular location">
    <subcellularLocation>
        <location evidence="3">Cell membrane</location>
        <topology evidence="3">Lipid-anchor</topology>
        <orientation evidence="3">Cytoplasmic side</orientation>
    </subcellularLocation>
</comment>
<comment type="tissue specificity">
    <text evidence="2">Expressed in a variety of tissues. Down-regulated in pancreatic and esophageal cancer.</text>
</comment>
<comment type="similarity">
    <text evidence="3">Belongs to the G protein gamma family.</text>
</comment>
<gene>
    <name type="primary">GNG7</name>
    <name type="synonym">GNGT7</name>
</gene>
<organism>
    <name type="scientific">Homo sapiens</name>
    <name type="common">Human</name>
    <dbReference type="NCBI Taxonomy" id="9606"/>
    <lineage>
        <taxon>Eukaryota</taxon>
        <taxon>Metazoa</taxon>
        <taxon>Chordata</taxon>
        <taxon>Craniata</taxon>
        <taxon>Vertebrata</taxon>
        <taxon>Euteleostomi</taxon>
        <taxon>Mammalia</taxon>
        <taxon>Eutheria</taxon>
        <taxon>Euarchontoglires</taxon>
        <taxon>Primates</taxon>
        <taxon>Haplorrhini</taxon>
        <taxon>Catarrhini</taxon>
        <taxon>Hominidae</taxon>
        <taxon>Homo</taxon>
    </lineage>
</organism>
<sequence length="68" mass="7522">MSATNNIAQARKLVEQLRIEAGIERIKVSKAASDLMSYCEQHARNDPLLVGVPASENPFKDKKPCIIL</sequence>
<proteinExistence type="evidence at protein level"/>